<accession>A9I7X7</accession>
<feature type="chain" id="PRO_0000377089" description="tRNA dimethylallyltransferase">
    <location>
        <begin position="1"/>
        <end position="314"/>
    </location>
</feature>
<feature type="region of interest" description="Interaction with substrate tRNA" evidence="1">
    <location>
        <begin position="37"/>
        <end position="40"/>
    </location>
</feature>
<feature type="region of interest" description="Interaction with substrate tRNA" evidence="1">
    <location>
        <begin position="161"/>
        <end position="165"/>
    </location>
</feature>
<feature type="region of interest" description="Interaction with substrate tRNA" evidence="1">
    <location>
        <begin position="245"/>
        <end position="250"/>
    </location>
</feature>
<feature type="binding site" evidence="1">
    <location>
        <begin position="12"/>
        <end position="19"/>
    </location>
    <ligand>
        <name>ATP</name>
        <dbReference type="ChEBI" id="CHEBI:30616"/>
    </ligand>
</feature>
<feature type="binding site" evidence="1">
    <location>
        <begin position="14"/>
        <end position="19"/>
    </location>
    <ligand>
        <name>substrate</name>
    </ligand>
</feature>
<feature type="site" description="Interaction with substrate tRNA" evidence="1">
    <location>
        <position position="103"/>
    </location>
</feature>
<feature type="site" description="Interaction with substrate tRNA" evidence="1">
    <location>
        <position position="125"/>
    </location>
</feature>
<keyword id="KW-0067">ATP-binding</keyword>
<keyword id="KW-0460">Magnesium</keyword>
<keyword id="KW-0547">Nucleotide-binding</keyword>
<keyword id="KW-0808">Transferase</keyword>
<keyword id="KW-0819">tRNA processing</keyword>
<evidence type="ECO:0000255" key="1">
    <source>
        <dbReference type="HAMAP-Rule" id="MF_00185"/>
    </source>
</evidence>
<gene>
    <name evidence="1" type="primary">miaA</name>
    <name type="ordered locus">Bpet0826</name>
</gene>
<comment type="function">
    <text evidence="1">Catalyzes the transfer of a dimethylallyl group onto the adenine at position 37 in tRNAs that read codons beginning with uridine, leading to the formation of N6-(dimethylallyl)adenosine (i(6)A).</text>
</comment>
<comment type="catalytic activity">
    <reaction evidence="1">
        <text>adenosine(37) in tRNA + dimethylallyl diphosphate = N(6)-dimethylallyladenosine(37) in tRNA + diphosphate</text>
        <dbReference type="Rhea" id="RHEA:26482"/>
        <dbReference type="Rhea" id="RHEA-COMP:10162"/>
        <dbReference type="Rhea" id="RHEA-COMP:10375"/>
        <dbReference type="ChEBI" id="CHEBI:33019"/>
        <dbReference type="ChEBI" id="CHEBI:57623"/>
        <dbReference type="ChEBI" id="CHEBI:74411"/>
        <dbReference type="ChEBI" id="CHEBI:74415"/>
        <dbReference type="EC" id="2.5.1.75"/>
    </reaction>
</comment>
<comment type="cofactor">
    <cofactor evidence="1">
        <name>Mg(2+)</name>
        <dbReference type="ChEBI" id="CHEBI:18420"/>
    </cofactor>
</comment>
<comment type="subunit">
    <text evidence="1">Monomer.</text>
</comment>
<comment type="similarity">
    <text evidence="1">Belongs to the IPP transferase family.</text>
</comment>
<proteinExistence type="inferred from homology"/>
<protein>
    <recommendedName>
        <fullName evidence="1">tRNA dimethylallyltransferase</fullName>
        <ecNumber evidence="1">2.5.1.75</ecNumber>
    </recommendedName>
    <alternativeName>
        <fullName evidence="1">Dimethylallyl diphosphate:tRNA dimethylallyltransferase</fullName>
        <shortName evidence="1">DMAPP:tRNA dimethylallyltransferase</shortName>
        <shortName evidence="1">DMATase</shortName>
    </alternativeName>
    <alternativeName>
        <fullName evidence="1">Isopentenyl-diphosphate:tRNA isopentenyltransferase</fullName>
        <shortName evidence="1">IPP transferase</shortName>
        <shortName evidence="1">IPPT</shortName>
        <shortName evidence="1">IPTase</shortName>
    </alternativeName>
</protein>
<sequence length="314" mass="33950">MSSAAPIVCLAGPTAAGKSAATLALAQRWPLEVVNVDSATIYRGMDIGTAKPSPAEQARVPQHLLDIRDPAQSYSAAEFRADALRLIDEIRARGRMPLLAGGTMLYYKALRDGLDDLPQADPALRAELEARAARLGWPALHAELARLDPATAARLAPNDSQRIQRALEICTLSGQPMSALLHGRQRAADATPHRYVTLSLEPSDRAALHARIAQRFDAMLAGGLLDEVRALRARGDLHPGLPSVRCVGYRQMWAHLDGAVDLETAREQAIAATRQLAKRQLTWLRAQPERLVVDCLAGNASGRVVDRVAEILAD</sequence>
<organism>
    <name type="scientific">Bordetella petrii (strain ATCC BAA-461 / DSM 12804 / CCUG 43448)</name>
    <dbReference type="NCBI Taxonomy" id="340100"/>
    <lineage>
        <taxon>Bacteria</taxon>
        <taxon>Pseudomonadati</taxon>
        <taxon>Pseudomonadota</taxon>
        <taxon>Betaproteobacteria</taxon>
        <taxon>Burkholderiales</taxon>
        <taxon>Alcaligenaceae</taxon>
        <taxon>Bordetella</taxon>
    </lineage>
</organism>
<name>MIAA_BORPD</name>
<reference key="1">
    <citation type="journal article" date="2008" name="BMC Genomics">
        <title>The missing link: Bordetella petrii is endowed with both the metabolic versatility of environmental bacteria and virulence traits of pathogenic Bordetellae.</title>
        <authorList>
            <person name="Gross R."/>
            <person name="Guzman C.A."/>
            <person name="Sebaihia M."/>
            <person name="Martin dos Santos V.A.P."/>
            <person name="Pieper D.H."/>
            <person name="Koebnik R."/>
            <person name="Lechner M."/>
            <person name="Bartels D."/>
            <person name="Buhrmester J."/>
            <person name="Choudhuri J.V."/>
            <person name="Ebensen T."/>
            <person name="Gaigalat L."/>
            <person name="Herrmann S."/>
            <person name="Khachane A.N."/>
            <person name="Larisch C."/>
            <person name="Link S."/>
            <person name="Linke B."/>
            <person name="Meyer F."/>
            <person name="Mormann S."/>
            <person name="Nakunst D."/>
            <person name="Rueckert C."/>
            <person name="Schneiker-Bekel S."/>
            <person name="Schulze K."/>
            <person name="Voerholter F.-J."/>
            <person name="Yevsa T."/>
            <person name="Engle J.T."/>
            <person name="Goldman W.E."/>
            <person name="Puehler A."/>
            <person name="Goebel U.B."/>
            <person name="Goesmann A."/>
            <person name="Bloecker H."/>
            <person name="Kaiser O."/>
            <person name="Martinez-Arias R."/>
        </authorList>
    </citation>
    <scope>NUCLEOTIDE SEQUENCE [LARGE SCALE GENOMIC DNA]</scope>
    <source>
        <strain>ATCC BAA-461 / DSM 12804 / CCUG 43448</strain>
    </source>
</reference>
<dbReference type="EC" id="2.5.1.75" evidence="1"/>
<dbReference type="EMBL" id="AM902716">
    <property type="protein sequence ID" value="CAP41158.1"/>
    <property type="molecule type" value="Genomic_DNA"/>
</dbReference>
<dbReference type="SMR" id="A9I7X7"/>
<dbReference type="STRING" id="94624.Bpet0826"/>
<dbReference type="KEGG" id="bpt:Bpet0826"/>
<dbReference type="eggNOG" id="COG0324">
    <property type="taxonomic scope" value="Bacteria"/>
</dbReference>
<dbReference type="Proteomes" id="UP000001225">
    <property type="component" value="Chromosome"/>
</dbReference>
<dbReference type="GO" id="GO:0005524">
    <property type="term" value="F:ATP binding"/>
    <property type="evidence" value="ECO:0007669"/>
    <property type="project" value="UniProtKB-UniRule"/>
</dbReference>
<dbReference type="GO" id="GO:0052381">
    <property type="term" value="F:tRNA dimethylallyltransferase activity"/>
    <property type="evidence" value="ECO:0007669"/>
    <property type="project" value="UniProtKB-UniRule"/>
</dbReference>
<dbReference type="GO" id="GO:0006400">
    <property type="term" value="P:tRNA modification"/>
    <property type="evidence" value="ECO:0007669"/>
    <property type="project" value="TreeGrafter"/>
</dbReference>
<dbReference type="FunFam" id="1.10.20.140:FF:000001">
    <property type="entry name" value="tRNA dimethylallyltransferase"/>
    <property type="match status" value="1"/>
</dbReference>
<dbReference type="Gene3D" id="1.10.20.140">
    <property type="match status" value="1"/>
</dbReference>
<dbReference type="Gene3D" id="3.40.50.300">
    <property type="entry name" value="P-loop containing nucleotide triphosphate hydrolases"/>
    <property type="match status" value="1"/>
</dbReference>
<dbReference type="HAMAP" id="MF_00185">
    <property type="entry name" value="IPP_trans"/>
    <property type="match status" value="1"/>
</dbReference>
<dbReference type="InterPro" id="IPR039657">
    <property type="entry name" value="Dimethylallyltransferase"/>
</dbReference>
<dbReference type="InterPro" id="IPR018022">
    <property type="entry name" value="IPT"/>
</dbReference>
<dbReference type="InterPro" id="IPR027417">
    <property type="entry name" value="P-loop_NTPase"/>
</dbReference>
<dbReference type="NCBIfam" id="TIGR00174">
    <property type="entry name" value="miaA"/>
    <property type="match status" value="1"/>
</dbReference>
<dbReference type="PANTHER" id="PTHR11088">
    <property type="entry name" value="TRNA DIMETHYLALLYLTRANSFERASE"/>
    <property type="match status" value="1"/>
</dbReference>
<dbReference type="PANTHER" id="PTHR11088:SF60">
    <property type="entry name" value="TRNA DIMETHYLALLYLTRANSFERASE"/>
    <property type="match status" value="1"/>
</dbReference>
<dbReference type="Pfam" id="PF01715">
    <property type="entry name" value="IPPT"/>
    <property type="match status" value="1"/>
</dbReference>
<dbReference type="SUPFAM" id="SSF52540">
    <property type="entry name" value="P-loop containing nucleoside triphosphate hydrolases"/>
    <property type="match status" value="2"/>
</dbReference>